<proteinExistence type="inferred from homology"/>
<protein>
    <recommendedName>
        <fullName evidence="1">Arginine--tRNA ligase</fullName>
        <ecNumber evidence="1">6.1.1.19</ecNumber>
    </recommendedName>
    <alternativeName>
        <fullName evidence="1">Arginyl-tRNA synthetase</fullName>
        <shortName evidence="1">ArgRS</shortName>
    </alternativeName>
</protein>
<keyword id="KW-0030">Aminoacyl-tRNA synthetase</keyword>
<keyword id="KW-0067">ATP-binding</keyword>
<keyword id="KW-0963">Cytoplasm</keyword>
<keyword id="KW-0436">Ligase</keyword>
<keyword id="KW-0547">Nucleotide-binding</keyword>
<keyword id="KW-0648">Protein biosynthesis</keyword>
<keyword id="KW-1185">Reference proteome</keyword>
<accession>A3D9A3</accession>
<gene>
    <name evidence="1" type="primary">argS</name>
    <name type="ordered locus">Sbal_3845</name>
</gene>
<sequence length="581" mass="64864">MKSHIQSLLEQTLESFKQQGIVPADFEARIQVDRTKDKSHGDLATNLAMMLTKVAGKNPRELAQLIIDTLPASAYVAKVEIAGPGFINFFINDSALADQLQNAVNDEHLGIKLPTPQTVVVDYSSPNLAKEMHVGHLRSTIIGDSVVRALEFLGHKVIRQNHVGDWGTQFGMLLAYMEELRAKNGEKAQLELSDLENFYRAAKLRFDESAEFATRARQLVVELQSGDEYCNKLWREFNDISLSHCHEVYARLGVSLTRADVHGESAYNADLEQVVKDLDAQGLLTESNGAKVVFQEAFRNKEGEPLPVIIQKADGGYLYATSDLAAMRYRSNVLKADRVLYFVDLRQALHFQQVFSLAKLAKFVREDMSLEHLGFGTMNGEDGRPFKTRSGGVVKLVDLLEEANVRALELVRSKNPDMDEATLTEIARVVGISAVKYADLSKNRTSDYIFSFEQMLSFEGNTAPYLLYAYTRVAGIFKRVTDLDLSQAKIVLEHEKEKDLGNKLAQFGEILSRVVDKGQPHVLCAYLYELAGAFSSFYEACPVLAADNDAQKNSRLLLAQLTARTLQKGLNLLGIETLERM</sequence>
<dbReference type="EC" id="6.1.1.19" evidence="1"/>
<dbReference type="EMBL" id="CP000563">
    <property type="protein sequence ID" value="ABN63316.1"/>
    <property type="molecule type" value="Genomic_DNA"/>
</dbReference>
<dbReference type="RefSeq" id="WP_011847952.1">
    <property type="nucleotide sequence ID" value="NC_009052.1"/>
</dbReference>
<dbReference type="SMR" id="A3D9A3"/>
<dbReference type="STRING" id="325240.Sbal_3845"/>
<dbReference type="KEGG" id="sbl:Sbal_3845"/>
<dbReference type="HOGENOM" id="CLU_006406_5_1_6"/>
<dbReference type="OrthoDB" id="9803211at2"/>
<dbReference type="Proteomes" id="UP000001557">
    <property type="component" value="Chromosome"/>
</dbReference>
<dbReference type="GO" id="GO:0005737">
    <property type="term" value="C:cytoplasm"/>
    <property type="evidence" value="ECO:0007669"/>
    <property type="project" value="UniProtKB-SubCell"/>
</dbReference>
<dbReference type="GO" id="GO:0004814">
    <property type="term" value="F:arginine-tRNA ligase activity"/>
    <property type="evidence" value="ECO:0007669"/>
    <property type="project" value="UniProtKB-UniRule"/>
</dbReference>
<dbReference type="GO" id="GO:0005524">
    <property type="term" value="F:ATP binding"/>
    <property type="evidence" value="ECO:0007669"/>
    <property type="project" value="UniProtKB-UniRule"/>
</dbReference>
<dbReference type="GO" id="GO:0006420">
    <property type="term" value="P:arginyl-tRNA aminoacylation"/>
    <property type="evidence" value="ECO:0007669"/>
    <property type="project" value="UniProtKB-UniRule"/>
</dbReference>
<dbReference type="CDD" id="cd07956">
    <property type="entry name" value="Anticodon_Ia_Arg"/>
    <property type="match status" value="1"/>
</dbReference>
<dbReference type="CDD" id="cd00671">
    <property type="entry name" value="ArgRS_core"/>
    <property type="match status" value="1"/>
</dbReference>
<dbReference type="FunFam" id="1.10.730.10:FF:000001">
    <property type="entry name" value="Arginine--tRNA ligase"/>
    <property type="match status" value="1"/>
</dbReference>
<dbReference type="FunFam" id="3.30.1360.70:FF:000003">
    <property type="entry name" value="Arginine--tRNA ligase"/>
    <property type="match status" value="1"/>
</dbReference>
<dbReference type="FunFam" id="3.40.50.620:FF:000030">
    <property type="entry name" value="Arginine--tRNA ligase"/>
    <property type="match status" value="1"/>
</dbReference>
<dbReference type="Gene3D" id="3.30.1360.70">
    <property type="entry name" value="Arginyl tRNA synthetase N-terminal domain"/>
    <property type="match status" value="1"/>
</dbReference>
<dbReference type="Gene3D" id="3.40.50.620">
    <property type="entry name" value="HUPs"/>
    <property type="match status" value="1"/>
</dbReference>
<dbReference type="Gene3D" id="1.10.730.10">
    <property type="entry name" value="Isoleucyl-tRNA Synthetase, Domain 1"/>
    <property type="match status" value="1"/>
</dbReference>
<dbReference type="HAMAP" id="MF_00123">
    <property type="entry name" value="Arg_tRNA_synth"/>
    <property type="match status" value="1"/>
</dbReference>
<dbReference type="InterPro" id="IPR001412">
    <property type="entry name" value="aa-tRNA-synth_I_CS"/>
</dbReference>
<dbReference type="InterPro" id="IPR001278">
    <property type="entry name" value="Arg-tRNA-ligase"/>
</dbReference>
<dbReference type="InterPro" id="IPR005148">
    <property type="entry name" value="Arg-tRNA-synth_N"/>
</dbReference>
<dbReference type="InterPro" id="IPR036695">
    <property type="entry name" value="Arg-tRNA-synth_N_sf"/>
</dbReference>
<dbReference type="InterPro" id="IPR035684">
    <property type="entry name" value="ArgRS_core"/>
</dbReference>
<dbReference type="InterPro" id="IPR008909">
    <property type="entry name" value="DALR_anticod-bd"/>
</dbReference>
<dbReference type="InterPro" id="IPR014729">
    <property type="entry name" value="Rossmann-like_a/b/a_fold"/>
</dbReference>
<dbReference type="InterPro" id="IPR009080">
    <property type="entry name" value="tRNAsynth_Ia_anticodon-bd"/>
</dbReference>
<dbReference type="NCBIfam" id="TIGR00456">
    <property type="entry name" value="argS"/>
    <property type="match status" value="1"/>
</dbReference>
<dbReference type="PANTHER" id="PTHR11956:SF5">
    <property type="entry name" value="ARGININE--TRNA LIGASE, CYTOPLASMIC"/>
    <property type="match status" value="1"/>
</dbReference>
<dbReference type="PANTHER" id="PTHR11956">
    <property type="entry name" value="ARGINYL-TRNA SYNTHETASE"/>
    <property type="match status" value="1"/>
</dbReference>
<dbReference type="Pfam" id="PF03485">
    <property type="entry name" value="Arg_tRNA_synt_N"/>
    <property type="match status" value="1"/>
</dbReference>
<dbReference type="Pfam" id="PF05746">
    <property type="entry name" value="DALR_1"/>
    <property type="match status" value="1"/>
</dbReference>
<dbReference type="Pfam" id="PF00750">
    <property type="entry name" value="tRNA-synt_1d"/>
    <property type="match status" value="1"/>
</dbReference>
<dbReference type="PRINTS" id="PR01038">
    <property type="entry name" value="TRNASYNTHARG"/>
</dbReference>
<dbReference type="SMART" id="SM01016">
    <property type="entry name" value="Arg_tRNA_synt_N"/>
    <property type="match status" value="1"/>
</dbReference>
<dbReference type="SMART" id="SM00836">
    <property type="entry name" value="DALR_1"/>
    <property type="match status" value="1"/>
</dbReference>
<dbReference type="SUPFAM" id="SSF47323">
    <property type="entry name" value="Anticodon-binding domain of a subclass of class I aminoacyl-tRNA synthetases"/>
    <property type="match status" value="1"/>
</dbReference>
<dbReference type="SUPFAM" id="SSF55190">
    <property type="entry name" value="Arginyl-tRNA synthetase (ArgRS), N-terminal 'additional' domain"/>
    <property type="match status" value="1"/>
</dbReference>
<dbReference type="SUPFAM" id="SSF52374">
    <property type="entry name" value="Nucleotidylyl transferase"/>
    <property type="match status" value="1"/>
</dbReference>
<dbReference type="PROSITE" id="PS00178">
    <property type="entry name" value="AA_TRNA_LIGASE_I"/>
    <property type="match status" value="1"/>
</dbReference>
<feature type="chain" id="PRO_1000018112" description="Arginine--tRNA ligase">
    <location>
        <begin position="1"/>
        <end position="581"/>
    </location>
</feature>
<feature type="short sequence motif" description="'HIGH' region">
    <location>
        <begin position="126"/>
        <end position="136"/>
    </location>
</feature>
<organism>
    <name type="scientific">Shewanella baltica (strain OS155 / ATCC BAA-1091)</name>
    <dbReference type="NCBI Taxonomy" id="325240"/>
    <lineage>
        <taxon>Bacteria</taxon>
        <taxon>Pseudomonadati</taxon>
        <taxon>Pseudomonadota</taxon>
        <taxon>Gammaproteobacteria</taxon>
        <taxon>Alteromonadales</taxon>
        <taxon>Shewanellaceae</taxon>
        <taxon>Shewanella</taxon>
    </lineage>
</organism>
<evidence type="ECO:0000255" key="1">
    <source>
        <dbReference type="HAMAP-Rule" id="MF_00123"/>
    </source>
</evidence>
<name>SYR_SHEB5</name>
<reference key="1">
    <citation type="submission" date="2007-02" db="EMBL/GenBank/DDBJ databases">
        <title>Complete sequence of chromosome of Shewanella baltica OS155.</title>
        <authorList>
            <consortium name="US DOE Joint Genome Institute"/>
            <person name="Copeland A."/>
            <person name="Lucas S."/>
            <person name="Lapidus A."/>
            <person name="Barry K."/>
            <person name="Detter J.C."/>
            <person name="Glavina del Rio T."/>
            <person name="Hammon N."/>
            <person name="Israni S."/>
            <person name="Dalin E."/>
            <person name="Tice H."/>
            <person name="Pitluck S."/>
            <person name="Sims D.R."/>
            <person name="Brettin T."/>
            <person name="Bruce D."/>
            <person name="Han C."/>
            <person name="Tapia R."/>
            <person name="Brainard J."/>
            <person name="Schmutz J."/>
            <person name="Larimer F."/>
            <person name="Land M."/>
            <person name="Hauser L."/>
            <person name="Kyrpides N."/>
            <person name="Mikhailova N."/>
            <person name="Brettar I."/>
            <person name="Klappenbach J."/>
            <person name="Konstantinidis K."/>
            <person name="Rodrigues J."/>
            <person name="Tiedje J."/>
            <person name="Richardson P."/>
        </authorList>
    </citation>
    <scope>NUCLEOTIDE SEQUENCE [LARGE SCALE GENOMIC DNA]</scope>
    <source>
        <strain>OS155 / ATCC BAA-1091</strain>
    </source>
</reference>
<comment type="catalytic activity">
    <reaction evidence="1">
        <text>tRNA(Arg) + L-arginine + ATP = L-arginyl-tRNA(Arg) + AMP + diphosphate</text>
        <dbReference type="Rhea" id="RHEA:20301"/>
        <dbReference type="Rhea" id="RHEA-COMP:9658"/>
        <dbReference type="Rhea" id="RHEA-COMP:9673"/>
        <dbReference type="ChEBI" id="CHEBI:30616"/>
        <dbReference type="ChEBI" id="CHEBI:32682"/>
        <dbReference type="ChEBI" id="CHEBI:33019"/>
        <dbReference type="ChEBI" id="CHEBI:78442"/>
        <dbReference type="ChEBI" id="CHEBI:78513"/>
        <dbReference type="ChEBI" id="CHEBI:456215"/>
        <dbReference type="EC" id="6.1.1.19"/>
    </reaction>
</comment>
<comment type="subunit">
    <text evidence="1">Monomer.</text>
</comment>
<comment type="subcellular location">
    <subcellularLocation>
        <location evidence="1">Cytoplasm</location>
    </subcellularLocation>
</comment>
<comment type="similarity">
    <text evidence="1">Belongs to the class-I aminoacyl-tRNA synthetase family.</text>
</comment>